<keyword id="KW-0002">3D-structure</keyword>
<keyword id="KW-1064">Adaptive immunity</keyword>
<keyword id="KW-0025">Alternative splicing</keyword>
<keyword id="KW-0225">Disease variant</keyword>
<keyword id="KW-1015">Disulfide bond</keyword>
<keyword id="KW-0391">Immunity</keyword>
<keyword id="KW-0472">Membrane</keyword>
<keyword id="KW-1267">Proteomics identification</keyword>
<keyword id="KW-0675">Receptor</keyword>
<keyword id="KW-1185">Reference proteome</keyword>
<keyword id="KW-0735">Signal-anchor</keyword>
<keyword id="KW-0812">Transmembrane</keyword>
<keyword id="KW-1133">Transmembrane helix</keyword>
<reference key="1">
    <citation type="journal article" date="2001" name="Science">
        <title>BAFF-R, a newly identified TNF receptor that specifically interacts with BAFF.</title>
        <authorList>
            <person name="Thompson J.S."/>
            <person name="Bixler S.A."/>
            <person name="Qian F."/>
            <person name="Vora K."/>
            <person name="Scott M.L."/>
            <person name="Cachero T.G."/>
            <person name="Hession C."/>
            <person name="Schneider P."/>
            <person name="Sizing I.D."/>
            <person name="Mullen C."/>
            <person name="Strauch K."/>
            <person name="Zafari M."/>
            <person name="Benjamin C.D."/>
            <person name="Tschopp J."/>
            <person name="Browning J.L."/>
            <person name="Ambrose C."/>
        </authorList>
    </citation>
    <scope>NUCLEOTIDE SEQUENCE [MRNA] (ISOFORMS 1 AND 2)</scope>
    <source>
        <tissue>B-cell lymphoma</tissue>
    </source>
</reference>
<reference key="2">
    <citation type="journal article" date="1999" name="Nature">
        <title>The DNA sequence of human chromosome 22.</title>
        <authorList>
            <person name="Dunham I."/>
            <person name="Hunt A.R."/>
            <person name="Collins J.E."/>
            <person name="Bruskiewich R."/>
            <person name="Beare D.M."/>
            <person name="Clamp M."/>
            <person name="Smink L.J."/>
            <person name="Ainscough R."/>
            <person name="Almeida J.P."/>
            <person name="Babbage A.K."/>
            <person name="Bagguley C."/>
            <person name="Bailey J."/>
            <person name="Barlow K.F."/>
            <person name="Bates K.N."/>
            <person name="Beasley O.P."/>
            <person name="Bird C.P."/>
            <person name="Blakey S.E."/>
            <person name="Bridgeman A.M."/>
            <person name="Buck D."/>
            <person name="Burgess J."/>
            <person name="Burrill W.D."/>
            <person name="Burton J."/>
            <person name="Carder C."/>
            <person name="Carter N.P."/>
            <person name="Chen Y."/>
            <person name="Clark G."/>
            <person name="Clegg S.M."/>
            <person name="Cobley V.E."/>
            <person name="Cole C.G."/>
            <person name="Collier R.E."/>
            <person name="Connor R."/>
            <person name="Conroy D."/>
            <person name="Corby N.R."/>
            <person name="Coville G.J."/>
            <person name="Cox A.V."/>
            <person name="Davis J."/>
            <person name="Dawson E."/>
            <person name="Dhami P.D."/>
            <person name="Dockree C."/>
            <person name="Dodsworth S.J."/>
            <person name="Durbin R.M."/>
            <person name="Ellington A.G."/>
            <person name="Evans K.L."/>
            <person name="Fey J.M."/>
            <person name="Fleming K."/>
            <person name="French L."/>
            <person name="Garner A.A."/>
            <person name="Gilbert J.G.R."/>
            <person name="Goward M.E."/>
            <person name="Grafham D.V."/>
            <person name="Griffiths M.N.D."/>
            <person name="Hall C."/>
            <person name="Hall R.E."/>
            <person name="Hall-Tamlyn G."/>
            <person name="Heathcott R.W."/>
            <person name="Ho S."/>
            <person name="Holmes S."/>
            <person name="Hunt S.E."/>
            <person name="Jones M.C."/>
            <person name="Kershaw J."/>
            <person name="Kimberley A.M."/>
            <person name="King A."/>
            <person name="Laird G.K."/>
            <person name="Langford C.F."/>
            <person name="Leversha M.A."/>
            <person name="Lloyd C."/>
            <person name="Lloyd D.M."/>
            <person name="Martyn I.D."/>
            <person name="Mashreghi-Mohammadi M."/>
            <person name="Matthews L.H."/>
            <person name="Mccann O.T."/>
            <person name="Mcclay J."/>
            <person name="Mclaren S."/>
            <person name="McMurray A.A."/>
            <person name="Milne S.A."/>
            <person name="Mortimore B.J."/>
            <person name="Odell C.N."/>
            <person name="Pavitt R."/>
            <person name="Pearce A.V."/>
            <person name="Pearson D."/>
            <person name="Phillimore B.J.C.T."/>
            <person name="Phillips S.H."/>
            <person name="Plumb R.W."/>
            <person name="Ramsay H."/>
            <person name="Ramsey Y."/>
            <person name="Rogers L."/>
            <person name="Ross M.T."/>
            <person name="Scott C.E."/>
            <person name="Sehra H.K."/>
            <person name="Skuce C.D."/>
            <person name="Smalley S."/>
            <person name="Smith M.L."/>
            <person name="Soderlund C."/>
            <person name="Spragon L."/>
            <person name="Steward C.A."/>
            <person name="Sulston J.E."/>
            <person name="Swann R.M."/>
            <person name="Vaudin M."/>
            <person name="Wall M."/>
            <person name="Wallis J.M."/>
            <person name="Whiteley M.N."/>
            <person name="Willey D.L."/>
            <person name="Williams L."/>
            <person name="Williams S.A."/>
            <person name="Williamson H."/>
            <person name="Wilmer T.E."/>
            <person name="Wilming L."/>
            <person name="Wright C.L."/>
            <person name="Hubbard T."/>
            <person name="Bentley D.R."/>
            <person name="Beck S."/>
            <person name="Rogers J."/>
            <person name="Shimizu N."/>
            <person name="Minoshima S."/>
            <person name="Kawasaki K."/>
            <person name="Sasaki T."/>
            <person name="Asakawa S."/>
            <person name="Kudoh J."/>
            <person name="Shintani A."/>
            <person name="Shibuya K."/>
            <person name="Yoshizaki Y."/>
            <person name="Aoki N."/>
            <person name="Mitsuyama S."/>
            <person name="Roe B.A."/>
            <person name="Chen F."/>
            <person name="Chu L."/>
            <person name="Crabtree J."/>
            <person name="Deschamps S."/>
            <person name="Do A."/>
            <person name="Do T."/>
            <person name="Dorman A."/>
            <person name="Fang F."/>
            <person name="Fu Y."/>
            <person name="Hu P."/>
            <person name="Hua A."/>
            <person name="Kenton S."/>
            <person name="Lai H."/>
            <person name="Lao H.I."/>
            <person name="Lewis J."/>
            <person name="Lewis S."/>
            <person name="Lin S.-P."/>
            <person name="Loh P."/>
            <person name="Malaj E."/>
            <person name="Nguyen T."/>
            <person name="Pan H."/>
            <person name="Phan S."/>
            <person name="Qi S."/>
            <person name="Qian Y."/>
            <person name="Ray L."/>
            <person name="Ren Q."/>
            <person name="Shaull S."/>
            <person name="Sloan D."/>
            <person name="Song L."/>
            <person name="Wang Q."/>
            <person name="Wang Y."/>
            <person name="Wang Z."/>
            <person name="White J."/>
            <person name="Willingham D."/>
            <person name="Wu H."/>
            <person name="Yao Z."/>
            <person name="Zhan M."/>
            <person name="Zhang G."/>
            <person name="Chissoe S."/>
            <person name="Murray J."/>
            <person name="Miller N."/>
            <person name="Minx P."/>
            <person name="Fulton R."/>
            <person name="Johnson D."/>
            <person name="Bemis G."/>
            <person name="Bentley D."/>
            <person name="Bradshaw H."/>
            <person name="Bourne S."/>
            <person name="Cordes M."/>
            <person name="Du Z."/>
            <person name="Fulton L."/>
            <person name="Goela D."/>
            <person name="Graves T."/>
            <person name="Hawkins J."/>
            <person name="Hinds K."/>
            <person name="Kemp K."/>
            <person name="Latreille P."/>
            <person name="Layman D."/>
            <person name="Ozersky P."/>
            <person name="Rohlfing T."/>
            <person name="Scheet P."/>
            <person name="Walker C."/>
            <person name="Wamsley A."/>
            <person name="Wohldmann P."/>
            <person name="Pepin K."/>
            <person name="Nelson J."/>
            <person name="Korf I."/>
            <person name="Bedell J.A."/>
            <person name="Hillier L.W."/>
            <person name="Mardis E."/>
            <person name="Waterston R."/>
            <person name="Wilson R."/>
            <person name="Emanuel B.S."/>
            <person name="Shaikh T."/>
            <person name="Kurahashi H."/>
            <person name="Saitta S."/>
            <person name="Budarf M.L."/>
            <person name="McDermid H.E."/>
            <person name="Johnson A."/>
            <person name="Wong A.C.C."/>
            <person name="Morrow B.E."/>
            <person name="Edelmann L."/>
            <person name="Kim U.J."/>
            <person name="Shizuya H."/>
            <person name="Simon M.I."/>
            <person name="Dumanski J.P."/>
            <person name="Peyrard M."/>
            <person name="Kedra D."/>
            <person name="Seroussi E."/>
            <person name="Fransson I."/>
            <person name="Tapia I."/>
            <person name="Bruder C.E."/>
            <person name="O'Brien K.P."/>
            <person name="Wilkinson P."/>
            <person name="Bodenteich A."/>
            <person name="Hartman K."/>
            <person name="Hu X."/>
            <person name="Khan A.S."/>
            <person name="Lane L."/>
            <person name="Tilahun Y."/>
            <person name="Wright H."/>
        </authorList>
    </citation>
    <scope>NUCLEOTIDE SEQUENCE [LARGE SCALE GENOMIC DNA]</scope>
</reference>
<reference key="3">
    <citation type="journal article" date="2001" name="Curr. Biol.">
        <title>Identification of a novel receptor for B lymphocyte stimulator that is mutated in a mouse strain with severe B cell deficiency.</title>
        <authorList>
            <person name="Yan M."/>
            <person name="Brady J.R."/>
            <person name="Chan B."/>
            <person name="Lee W.P."/>
            <person name="Hsu B."/>
            <person name="Harless S.M."/>
            <person name="Cancro M.P."/>
            <person name="Grewal I.S."/>
            <person name="Dixit V.M."/>
        </authorList>
    </citation>
    <scope>FUNCTION</scope>
</reference>
<reference key="4">
    <citation type="journal article" date="2002" name="Immunity">
        <title>BAFF/BLyS receptor 3 binds the B cell survival factor BAFF ligand through a discrete surface loop and promotes processing of NF-kappaB2.</title>
        <authorList>
            <person name="Kayagaki N."/>
            <person name="Yan M."/>
            <person name="Seshasayee D."/>
            <person name="Wang H."/>
            <person name="Lee W."/>
            <person name="French D.M."/>
            <person name="Grewal I.S."/>
            <person name="Cochran A.G."/>
            <person name="Gordon N.C."/>
            <person name="Yin J."/>
            <person name="Starovasnik M.A."/>
            <person name="Dixit V.M."/>
        </authorList>
    </citation>
    <scope>STRUCTURE BY NMR OF 26-33</scope>
    <scope>FUNCTION</scope>
    <scope>DISULFIDE BONDS</scope>
</reference>
<reference key="5">
    <citation type="journal article" date="2003" name="Biochemistry">
        <title>BAFF/BLyS receptor 3 comprises a minimal TNF receptor-like module that encodes a highly focused ligand-binding site.</title>
        <authorList>
            <person name="Gordon N.C."/>
            <person name="Pan B."/>
            <person name="Hymowitz S.G."/>
            <person name="Yin J."/>
            <person name="Kelley R.F."/>
            <person name="Cochran A.G."/>
            <person name="Yan M."/>
            <person name="Dixit V.M."/>
            <person name="Fairbrother W.J."/>
            <person name="Starovasnik M.A."/>
        </authorList>
    </citation>
    <scope>STRUCTURE BY NMR OF 1-61</scope>
    <scope>X-RAY CRYSTALLOGRAPHY (3.0 ANGSTROMS) OF 26-31 IN COMPLEX WITH TNFSF13B/TALL1/BAFF/BLYS</scope>
    <scope>DISULFIDE BONDS</scope>
    <scope>MUTAGENESIS OF ASP-26 AND LEU-28</scope>
</reference>
<reference key="6">
    <citation type="journal article" date="2003" name="Nature">
        <title>Ligand-receptor binding revealed by the TNF family member TALL-1.</title>
        <authorList>
            <person name="Liu Y."/>
            <person name="Hong X."/>
            <person name="Kappler J."/>
            <person name="Jiang L."/>
            <person name="Zhang R."/>
            <person name="Xu L."/>
            <person name="Pan C.-H."/>
            <person name="Martin W.E."/>
            <person name="Murphy R.C."/>
            <person name="Shu H.-B."/>
            <person name="Dai S."/>
            <person name="Zhang G."/>
        </authorList>
    </citation>
    <scope>X-RAY CRYSTALLOGRAPHY (2.5 ANGSTROMS) OF 16-46 IN COMPLEX WITH TNFSF13B/TALL1/BAFF/BLYS</scope>
    <scope>DISULFIDE BONDS</scope>
    <scope>MUTAGENESIS OF CYS-24 AND CYS-35</scope>
</reference>
<reference key="7">
    <citation type="journal article" date="2003" name="Nat. Struct. Biol.">
        <title>Crystal structure of the BAFF-BAFF-R complex and its implications for receptor activation.</title>
        <authorList>
            <person name="Kim H.M."/>
            <person name="Yu K.S."/>
            <person name="Lee M.E."/>
            <person name="Shin D.R."/>
            <person name="Kim Y.S."/>
            <person name="Paik S.-G."/>
            <person name="Yoo O.J."/>
            <person name="Lee H."/>
            <person name="Lee J.-O."/>
        </authorList>
    </citation>
    <scope>X-RAY CRYSTALLOGRAPHY (3.3 ANGSTROMS) OF 1-63 IN COMPLEX WITH TNFSF13B/TALL1/BAFF/BLYS</scope>
    <scope>DISULFIDE BONDS</scope>
</reference>
<reference key="8">
    <citation type="journal article" date="2006" name="Blood">
        <title>Synthetic anti-BR3 antibodies that mimic BAFF binding and target both human and murine B cells.</title>
        <authorList>
            <person name="Lee C.V."/>
            <person name="Hymowitz S.G."/>
            <person name="Wallweber H.J."/>
            <person name="Gordon N.C."/>
            <person name="Billeci K.L."/>
            <person name="Tsai S.-P."/>
            <person name="Compaan D.M."/>
            <person name="Yin J."/>
            <person name="Gong Q."/>
            <person name="Kelley R.F."/>
            <person name="DeForge L.E."/>
            <person name="Martin F."/>
            <person name="Starovasnik M.A."/>
            <person name="Fuh G."/>
        </authorList>
    </citation>
    <scope>X-RAY CRYSTALLOGRAPHY (2.61 ANGSTROMS) OF 7-54</scope>
    <scope>INTERACTION WITH TNFSF13B/TALL1/BAFF/BLYS</scope>
</reference>
<reference key="9">
    <citation type="journal article" date="2005" name="J. Clin. Immunol.">
        <title>Mutational analysis of human BAFF receptor TNFRSF13C (BAFF-R) in patients with common variable immunodeficiency.</title>
        <authorList>
            <person name="Losi C.G."/>
            <person name="Silini A."/>
            <person name="Fiorini C."/>
            <person name="Soresina A."/>
            <person name="Meini A."/>
            <person name="Ferrari S."/>
            <person name="Notarangelo L.D."/>
            <person name="Lougaris V."/>
            <person name="Plebani A."/>
        </authorList>
    </citation>
    <scope>VARIANTS VAL-64 AND TYR-159</scope>
</reference>
<reference key="10">
    <citation type="journal article" date="2009" name="Proc. Natl. Acad. Sci. U.S.A.">
        <title>B-cell activating factor receptor deficiency is associated with an adult-onset antibody deficiency syndrome in humans.</title>
        <authorList>
            <person name="Warnatz K."/>
            <person name="Salzer U."/>
            <person name="Rizzi M."/>
            <person name="Fischer B."/>
            <person name="Gutenberger S."/>
            <person name="Boehm J."/>
            <person name="Kienzler A.-K."/>
            <person name="Pan-Hammarstroem Q."/>
            <person name="Hammarstroem L."/>
            <person name="Rakhmanov M."/>
            <person name="Schlesier M."/>
            <person name="Grimbacher B."/>
            <person name="Peter H.-H."/>
            <person name="Eibel H."/>
        </authorList>
    </citation>
    <scope>VARIANT CVID4 89-LEU--VAL-96 DEL</scope>
    <scope>CHARACTERIZATION OF VARIANT CVID4 89-LEU--VAL-96 DEL</scope>
</reference>
<evidence type="ECO:0000255" key="1"/>
<evidence type="ECO:0000256" key="2">
    <source>
        <dbReference type="SAM" id="MobiDB-lite"/>
    </source>
</evidence>
<evidence type="ECO:0000269" key="3">
    <source>
    </source>
</evidence>
<evidence type="ECO:0000269" key="4">
    <source>
    </source>
</evidence>
<evidence type="ECO:0000269" key="5">
    <source>
    </source>
</evidence>
<evidence type="ECO:0000269" key="6">
    <source>
    </source>
</evidence>
<evidence type="ECO:0000269" key="7">
    <source>
    </source>
</evidence>
<evidence type="ECO:0000269" key="8">
    <source>
    </source>
</evidence>
<evidence type="ECO:0000303" key="9">
    <source>
    </source>
</evidence>
<evidence type="ECO:0000305" key="10"/>
<evidence type="ECO:0007829" key="11">
    <source>
        <dbReference type="PDB" id="1OQE"/>
    </source>
</evidence>
<proteinExistence type="evidence at protein level"/>
<organism>
    <name type="scientific">Homo sapiens</name>
    <name type="common">Human</name>
    <dbReference type="NCBI Taxonomy" id="9606"/>
    <lineage>
        <taxon>Eukaryota</taxon>
        <taxon>Metazoa</taxon>
        <taxon>Chordata</taxon>
        <taxon>Craniata</taxon>
        <taxon>Vertebrata</taxon>
        <taxon>Euteleostomi</taxon>
        <taxon>Mammalia</taxon>
        <taxon>Eutheria</taxon>
        <taxon>Euarchontoglires</taxon>
        <taxon>Primates</taxon>
        <taxon>Haplorrhini</taxon>
        <taxon>Catarrhini</taxon>
        <taxon>Hominidae</taxon>
        <taxon>Homo</taxon>
    </lineage>
</organism>
<protein>
    <recommendedName>
        <fullName>Tumor necrosis factor receptor superfamily member 13C</fullName>
    </recommendedName>
    <alternativeName>
        <fullName>B-cell-activating factor receptor</fullName>
    </alternativeName>
    <alternativeName>
        <fullName>BAFF receptor</fullName>
        <shortName>BAFF-R</shortName>
    </alternativeName>
    <alternativeName>
        <fullName>BLyS receptor 3</fullName>
    </alternativeName>
    <cdAntigenName>CD268</cdAntigenName>
</protein>
<dbReference type="EMBL" id="AF373846">
    <property type="protein sequence ID" value="AAK91826.1"/>
    <property type="molecule type" value="mRNA"/>
</dbReference>
<dbReference type="EMBL" id="Z99716">
    <property type="status" value="NOT_ANNOTATED_CDS"/>
    <property type="molecule type" value="Genomic_DNA"/>
</dbReference>
<dbReference type="CCDS" id="CCDS14024.1">
    <molecule id="Q96RJ3-1"/>
</dbReference>
<dbReference type="RefSeq" id="NP_443177.1">
    <molecule id="Q96RJ3-1"/>
    <property type="nucleotide sequence ID" value="NM_052945.4"/>
</dbReference>
<dbReference type="PDB" id="1MPV">
    <property type="method" value="NMR"/>
    <property type="chains" value="A=26-31"/>
</dbReference>
<dbReference type="PDB" id="1OQE">
    <property type="method" value="X-ray"/>
    <property type="resolution" value="2.50 A"/>
    <property type="chains" value="K/L/M/N/O/P/Q/R=16-46"/>
</dbReference>
<dbReference type="PDB" id="1OSX">
    <property type="method" value="NMR"/>
    <property type="chains" value="A=1-61"/>
</dbReference>
<dbReference type="PDB" id="2HFG">
    <property type="method" value="X-ray"/>
    <property type="resolution" value="2.61 A"/>
    <property type="chains" value="R=7-54"/>
</dbReference>
<dbReference type="PDB" id="3V56">
    <property type="method" value="X-ray"/>
    <property type="resolution" value="3.00 A"/>
    <property type="chains" value="G/H/I/J/K/L/Z=23-35"/>
</dbReference>
<dbReference type="PDB" id="4V46">
    <property type="method" value="X-ray"/>
    <property type="resolution" value="3.30 A"/>
    <property type="chains" value="B0/B1/B2/B3/B4/B5/B6/B7/B8/B9/BA/BB/BC/BD/BE/BF/BG/BH/BI/BJ/BK/BL/BM/BN/BO/BP/BQ/BR/BS/BT/BU/BV/BW/BX/BY/BZ/Ba/Bb/Bc/Bd/Be/Bf/Bg/Bh/Bi/Bj/Bk/Bl/Bm/Bn/Bo/Bp/Bq/Br/Bs/Bt/Bu/Bv/Bw/Bx=1-63"/>
</dbReference>
<dbReference type="PDBsum" id="1MPV"/>
<dbReference type="PDBsum" id="1OQE"/>
<dbReference type="PDBsum" id="1OSX"/>
<dbReference type="PDBsum" id="2HFG"/>
<dbReference type="PDBsum" id="3V56"/>
<dbReference type="PDBsum" id="4V46"/>
<dbReference type="BMRB" id="Q96RJ3"/>
<dbReference type="SMR" id="Q96RJ3"/>
<dbReference type="BioGRID" id="125443">
    <property type="interactions" value="15"/>
</dbReference>
<dbReference type="CORUM" id="Q96RJ3"/>
<dbReference type="FunCoup" id="Q96RJ3">
    <property type="interactions" value="719"/>
</dbReference>
<dbReference type="IntAct" id="Q96RJ3">
    <property type="interactions" value="6"/>
</dbReference>
<dbReference type="STRING" id="9606.ENSP00000291232"/>
<dbReference type="ChEMBL" id="CHEMBL4630882"/>
<dbReference type="GuidetoPHARMACOLOGY" id="1886"/>
<dbReference type="GlyCosmos" id="Q96RJ3">
    <property type="glycosylation" value="1 site, 1 glycan"/>
</dbReference>
<dbReference type="GlyGen" id="Q96RJ3">
    <property type="glycosylation" value="1 site, 1 O-linked glycan (1 site)"/>
</dbReference>
<dbReference type="iPTMnet" id="Q96RJ3"/>
<dbReference type="PhosphoSitePlus" id="Q96RJ3"/>
<dbReference type="BioMuta" id="TNFRSF13C"/>
<dbReference type="DMDM" id="21264093"/>
<dbReference type="MassIVE" id="Q96RJ3"/>
<dbReference type="PaxDb" id="9606-ENSP00000291232"/>
<dbReference type="PeptideAtlas" id="Q96RJ3"/>
<dbReference type="ProteomicsDB" id="77970">
    <molecule id="Q96RJ3-1"/>
</dbReference>
<dbReference type="ProteomicsDB" id="77971">
    <molecule id="Q96RJ3-2"/>
</dbReference>
<dbReference type="ABCD" id="Q96RJ3">
    <property type="antibodies" value="3 sequenced antibodies"/>
</dbReference>
<dbReference type="Antibodypedia" id="307">
    <property type="antibodies" value="723 antibodies from 44 providers"/>
</dbReference>
<dbReference type="DNASU" id="115650"/>
<dbReference type="Ensembl" id="ENST00000291232.5">
    <molecule id="Q96RJ3-1"/>
    <property type="protein sequence ID" value="ENSP00000291232.3"/>
    <property type="gene ID" value="ENSG00000159958.7"/>
</dbReference>
<dbReference type="GeneID" id="115650"/>
<dbReference type="KEGG" id="hsa:115650"/>
<dbReference type="MANE-Select" id="ENST00000291232.5">
    <property type="protein sequence ID" value="ENSP00000291232.3"/>
    <property type="RefSeq nucleotide sequence ID" value="NM_052945.4"/>
    <property type="RefSeq protein sequence ID" value="NP_443177.1"/>
</dbReference>
<dbReference type="UCSC" id="uc003bbl.3">
    <molecule id="Q96RJ3-1"/>
    <property type="organism name" value="human"/>
</dbReference>
<dbReference type="AGR" id="HGNC:17755"/>
<dbReference type="CTD" id="115650"/>
<dbReference type="DisGeNET" id="115650"/>
<dbReference type="GeneCards" id="TNFRSF13C"/>
<dbReference type="HGNC" id="HGNC:17755">
    <property type="gene designation" value="TNFRSF13C"/>
</dbReference>
<dbReference type="HPA" id="ENSG00000159958">
    <property type="expression patterns" value="Group enriched (intestine, lymphoid tissue)"/>
</dbReference>
<dbReference type="MalaCards" id="TNFRSF13C"/>
<dbReference type="MIM" id="606269">
    <property type="type" value="gene"/>
</dbReference>
<dbReference type="MIM" id="613494">
    <property type="type" value="phenotype"/>
</dbReference>
<dbReference type="neXtProt" id="NX_Q96RJ3"/>
<dbReference type="OpenTargets" id="ENSG00000159958"/>
<dbReference type="Orphanet" id="1572">
    <property type="disease" value="Common variable immunodeficiency"/>
</dbReference>
<dbReference type="PharmGKB" id="PA38466"/>
<dbReference type="VEuPathDB" id="HostDB:ENSG00000159958"/>
<dbReference type="eggNOG" id="ENOG502T201">
    <property type="taxonomic scope" value="Eukaryota"/>
</dbReference>
<dbReference type="GeneTree" id="ENSGT00940000154485"/>
<dbReference type="HOGENOM" id="CLU_131020_0_0_1"/>
<dbReference type="InParanoid" id="Q96RJ3"/>
<dbReference type="OMA" id="RPCCQGD"/>
<dbReference type="OrthoDB" id="9392810at2759"/>
<dbReference type="PAN-GO" id="Q96RJ3">
    <property type="GO annotations" value="5 GO annotations based on evolutionary models"/>
</dbReference>
<dbReference type="PhylomeDB" id="Q96RJ3"/>
<dbReference type="TreeFam" id="TF336877"/>
<dbReference type="PathwayCommons" id="Q96RJ3"/>
<dbReference type="Reactome" id="R-HSA-5668541">
    <property type="pathway name" value="TNFR2 non-canonical NF-kB pathway"/>
</dbReference>
<dbReference type="Reactome" id="R-HSA-5676594">
    <property type="pathway name" value="TNF receptor superfamily (TNFSF) members mediating non-canonical NF-kB pathway"/>
</dbReference>
<dbReference type="SignaLink" id="Q96RJ3"/>
<dbReference type="SIGNOR" id="Q96RJ3"/>
<dbReference type="BioGRID-ORCS" id="115650">
    <property type="hits" value="49 hits in 1144 CRISPR screens"/>
</dbReference>
<dbReference type="ChiTaRS" id="TNFRSF13C">
    <property type="organism name" value="human"/>
</dbReference>
<dbReference type="EvolutionaryTrace" id="Q96RJ3"/>
<dbReference type="GeneWiki" id="TNFRSF13C"/>
<dbReference type="GenomeRNAi" id="115650"/>
<dbReference type="Pharos" id="Q96RJ3">
    <property type="development level" value="Tbio"/>
</dbReference>
<dbReference type="PRO" id="PR:Q96RJ3"/>
<dbReference type="Proteomes" id="UP000005640">
    <property type="component" value="Chromosome 22"/>
</dbReference>
<dbReference type="RNAct" id="Q96RJ3">
    <property type="molecule type" value="protein"/>
</dbReference>
<dbReference type="Bgee" id="ENSG00000159958">
    <property type="expression patterns" value="Expressed in spleen and 110 other cell types or tissues"/>
</dbReference>
<dbReference type="ExpressionAtlas" id="Q96RJ3">
    <property type="expression patterns" value="baseline and differential"/>
</dbReference>
<dbReference type="GO" id="GO:0009897">
    <property type="term" value="C:external side of plasma membrane"/>
    <property type="evidence" value="ECO:0000318"/>
    <property type="project" value="GO_Central"/>
</dbReference>
<dbReference type="GO" id="GO:0005886">
    <property type="term" value="C:plasma membrane"/>
    <property type="evidence" value="ECO:0000304"/>
    <property type="project" value="Reactome"/>
</dbReference>
<dbReference type="GO" id="GO:0038023">
    <property type="term" value="F:signaling receptor activity"/>
    <property type="evidence" value="ECO:0007669"/>
    <property type="project" value="InterPro"/>
</dbReference>
<dbReference type="GO" id="GO:0002250">
    <property type="term" value="P:adaptive immune response"/>
    <property type="evidence" value="ECO:0007669"/>
    <property type="project" value="UniProtKB-KW"/>
</dbReference>
<dbReference type="GO" id="GO:0031296">
    <property type="term" value="P:B cell costimulation"/>
    <property type="evidence" value="ECO:0000318"/>
    <property type="project" value="GO_Central"/>
</dbReference>
<dbReference type="GO" id="GO:0030890">
    <property type="term" value="P:positive regulation of B cell proliferation"/>
    <property type="evidence" value="ECO:0000318"/>
    <property type="project" value="GO_Central"/>
</dbReference>
<dbReference type="GO" id="GO:0042102">
    <property type="term" value="P:positive regulation of T cell proliferation"/>
    <property type="evidence" value="ECO:0000318"/>
    <property type="project" value="GO_Central"/>
</dbReference>
<dbReference type="GO" id="GO:0031295">
    <property type="term" value="P:T cell costimulation"/>
    <property type="evidence" value="ECO:0000318"/>
    <property type="project" value="GO_Central"/>
</dbReference>
<dbReference type="GO" id="GO:0033209">
    <property type="term" value="P:tumor necrosis factor-mediated signaling pathway"/>
    <property type="evidence" value="ECO:0007669"/>
    <property type="project" value="InterPro"/>
</dbReference>
<dbReference type="InterPro" id="IPR022338">
    <property type="entry name" value="TNFR_13C"/>
</dbReference>
<dbReference type="InterPro" id="IPR043521">
    <property type="entry name" value="TNFR_13C/17"/>
</dbReference>
<dbReference type="InterPro" id="IPR015336">
    <property type="entry name" value="TNFR_13C_TALL-1-bd"/>
</dbReference>
<dbReference type="PANTHER" id="PTHR20437">
    <property type="entry name" value="TUMOR NECROSIS FACTOR RECEPTOR SUBFAMILY MEMBER 13/17"/>
    <property type="match status" value="1"/>
</dbReference>
<dbReference type="PANTHER" id="PTHR20437:SF2">
    <property type="entry name" value="TUMOR NECROSIS FACTOR RECEPTOR SUPERFAMILY MEMBER 13C"/>
    <property type="match status" value="1"/>
</dbReference>
<dbReference type="Pfam" id="PF09256">
    <property type="entry name" value="BaffR-Tall_bind"/>
    <property type="match status" value="1"/>
</dbReference>
<dbReference type="PRINTS" id="PR01964">
    <property type="entry name" value="TNFACTORR13C"/>
</dbReference>
<dbReference type="SUPFAM" id="SSF57586">
    <property type="entry name" value="TNF receptor-like"/>
    <property type="match status" value="1"/>
</dbReference>
<name>TR13C_HUMAN</name>
<sequence length="184" mass="18864">MRRGPRSLRGRDAPAPTPCVPAECFDLLVRHCVACGLLRTPRPKPAGASSPAPRTALQPQESVGAGAGEAALPLPGLLFGAPALLGLALVLALVLVGLVSWRRRQRRLRGASSAEAPDGDKDAPEPLDKVIILSPGISDATAPAWPPPGEDPGTTPPGHSVPVPATELGSTELVTTKTAGPEQQ</sequence>
<gene>
    <name type="primary">TNFRSF13C</name>
    <name type="synonym">BAFFR</name>
    <name type="synonym">BR3</name>
</gene>
<comment type="function">
    <text evidence="3 4">B-cell receptor specific for TNFSF13B/TALL1/BAFF/BLyS. Promotes the survival of mature B-cells and the B-cell response.</text>
</comment>
<comment type="subcellular location">
    <subcellularLocation>
        <location evidence="10">Membrane</location>
        <topology evidence="10">Single-pass type III membrane protein</topology>
    </subcellularLocation>
</comment>
<comment type="alternative products">
    <event type="alternative splicing"/>
    <isoform>
        <id>Q96RJ3-1</id>
        <name>1</name>
        <sequence type="displayed"/>
    </isoform>
    <isoform>
        <id>Q96RJ3-2</id>
        <name>2</name>
        <sequence type="described" ref="VSP_006505"/>
    </isoform>
</comment>
<comment type="tissue specificity">
    <text>Highly expressed in spleen and lymph node, and in resting B-cells. Detected at lower levels in activated B-cells, resting CD4+ T-cells, in thymus and peripheral blood leukocytes.</text>
</comment>
<comment type="disease" evidence="8">
    <disease id="DI-02801">
        <name>Immunodeficiency, common variable, 4</name>
        <acronym>CVID4</acronym>
        <description>A primary immunodeficiency characterized by antibody deficiency, hypogammaglobulinemia, recurrent bacterial infections and an inability to mount an antibody response to antigen. The defect results from a failure of B-cell differentiation and impaired secretion of immunoglobulins; the numbers of circulating B-cells is usually in the normal range, but can be low.</description>
        <dbReference type="MIM" id="613494"/>
    </disease>
    <text>The disease is caused by variants affecting the gene represented in this entry.</text>
</comment>
<accession>Q96RJ3</accession>
<feature type="chain" id="PRO_0000058933" description="Tumor necrosis factor receptor superfamily member 13C">
    <location>
        <begin position="1"/>
        <end position="184"/>
    </location>
</feature>
<feature type="topological domain" description="Extracellular" evidence="1">
    <location>
        <begin position="1"/>
        <end position="78"/>
    </location>
</feature>
<feature type="transmembrane region" description="Helical; Signal-anchor for type III membrane protein" evidence="1">
    <location>
        <begin position="79"/>
        <end position="99"/>
    </location>
</feature>
<feature type="topological domain" description="Cytoplasmic" evidence="1">
    <location>
        <begin position="100"/>
        <end position="184"/>
    </location>
</feature>
<feature type="repeat" description="TNFR-Cys; truncated">
    <location>
        <begin position="18"/>
        <end position="35"/>
    </location>
</feature>
<feature type="region of interest" description="Essential for TNFSF13B/TALL1/BAFF/BLyS binding">
    <location>
        <begin position="26"/>
        <end position="31"/>
    </location>
</feature>
<feature type="region of interest" description="Disordered" evidence="2">
    <location>
        <begin position="43"/>
        <end position="62"/>
    </location>
</feature>
<feature type="region of interest" description="Disordered" evidence="2">
    <location>
        <begin position="107"/>
        <end position="184"/>
    </location>
</feature>
<feature type="compositionally biased region" description="Basic and acidic residues" evidence="2">
    <location>
        <begin position="118"/>
        <end position="128"/>
    </location>
</feature>
<feature type="compositionally biased region" description="Polar residues" evidence="2">
    <location>
        <begin position="168"/>
        <end position="184"/>
    </location>
</feature>
<feature type="disulfide bond">
    <location>
        <begin position="19"/>
        <end position="32"/>
    </location>
</feature>
<feature type="disulfide bond">
    <location>
        <begin position="24"/>
        <end position="35"/>
    </location>
</feature>
<feature type="splice variant" id="VSP_006505" description="In isoform 2." evidence="9">
    <original>P</original>
    <variation>PA</variation>
    <location>
        <position position="143"/>
    </location>
</feature>
<feature type="sequence variant" id="VAR_063888" description="In dbSNP:rs547352394." evidence="7">
    <original>G</original>
    <variation>V</variation>
    <location>
        <position position="64"/>
    </location>
</feature>
<feature type="sequence variant" id="VAR_063889" description="In CVID4; fails to bind TNFSF13B and fails to induce downstream NF-kappa-B processing." evidence="8">
    <location>
        <begin position="89"/>
        <end position="96"/>
    </location>
</feature>
<feature type="sequence variant" id="VAR_063890" description="In dbSNP:rs61756766." evidence="7">
    <original>H</original>
    <variation>Y</variation>
    <location>
        <position position="159"/>
    </location>
</feature>
<feature type="mutagenesis site" description="Abolishes a disulfide bond and thereby changes the specificity, so that both TNFSF13B and TNFSF13 can be bound." evidence="5">
    <original>C</original>
    <variation>Y</variation>
    <location>
        <position position="24"/>
    </location>
</feature>
<feature type="mutagenesis site" description="Strongly reduced affinity for TNFSF13B." evidence="6">
    <original>D</original>
    <variation>A</variation>
    <location>
        <position position="26"/>
    </location>
</feature>
<feature type="mutagenesis site" description="Strongly reduced affinity for TNFSF13B." evidence="6">
    <original>L</original>
    <variation>A</variation>
    <location>
        <position position="28"/>
    </location>
</feature>
<feature type="mutagenesis site" description="Abolishes a disulfide bond and thereby changes the specificity, so that both TNFSF13B and TNFSF13 can be bound." evidence="5">
    <original>C</original>
    <variation>S</variation>
    <location>
        <position position="35"/>
    </location>
</feature>
<feature type="strand" evidence="11">
    <location>
        <begin position="23"/>
        <end position="26"/>
    </location>
</feature>
<feature type="turn" evidence="11">
    <location>
        <begin position="27"/>
        <end position="30"/>
    </location>
</feature>
<feature type="strand" evidence="11">
    <location>
        <begin position="31"/>
        <end position="34"/>
    </location>
</feature>
<feature type="helix" evidence="11">
    <location>
        <begin position="35"/>
        <end position="37"/>
    </location>
</feature>